<name>GATA_THISH</name>
<protein>
    <recommendedName>
        <fullName evidence="1">Glutamyl-tRNA(Gln) amidotransferase subunit A</fullName>
        <shortName evidence="1">Glu-ADT subunit A</shortName>
        <ecNumber evidence="1">6.3.5.7</ecNumber>
    </recommendedName>
</protein>
<gene>
    <name evidence="1" type="primary">gatA</name>
    <name type="ordered locus">Tgr7_0516</name>
</gene>
<evidence type="ECO:0000255" key="1">
    <source>
        <dbReference type="HAMAP-Rule" id="MF_00120"/>
    </source>
</evidence>
<sequence>MHEKTIAELSAALTKGECSSVELTEHFLKRIEALDGGLNSFVTVTAEQALAQAKAADDRRARGEAGPLTGVPMAQKDIFCTDGVRTTCGSKMLDNFIAPYDATVVERFKAEGCPMLGKTNMDEFAMGSSNETSFHGPVKNPWDTARVPGGSSGGSAAAVAARLTPSATGTDTGGSIRQPAALCGITGLKPTYGRVSRWGMIAFASSLDQGGPMAATAEDCALLANVMSGFDPRDSTSIERPAEDFTARLNEPLKGLRIGLPREFFGEGLDAGVAKAVDEAIEQYKQLGAEVKEVGLPNSGLSVPAYYVVAPAECSSNLARFDGVRYGYRCENPKDLMDLYTRSRGEGFGAEVKRRIMVGTYALSAGYFDAYYLKAQKIRRLIADDFARAFEEVDVILGPTSPSTAFRLGEKTDDPVTMYLSDIYTIAVNLAGLPGMSIPAGFSDGLPVGLQLIGNYFDEARLLGVAHQYQSVTDWHRRIPKGFE</sequence>
<accession>B8GL95</accession>
<feature type="chain" id="PRO_1000122497" description="Glutamyl-tRNA(Gln) amidotransferase subunit A">
    <location>
        <begin position="1"/>
        <end position="484"/>
    </location>
</feature>
<feature type="active site" description="Charge relay system" evidence="1">
    <location>
        <position position="76"/>
    </location>
</feature>
<feature type="active site" description="Charge relay system" evidence="1">
    <location>
        <position position="151"/>
    </location>
</feature>
<feature type="active site" description="Acyl-ester intermediate" evidence="1">
    <location>
        <position position="175"/>
    </location>
</feature>
<keyword id="KW-0067">ATP-binding</keyword>
<keyword id="KW-0436">Ligase</keyword>
<keyword id="KW-0547">Nucleotide-binding</keyword>
<keyword id="KW-0648">Protein biosynthesis</keyword>
<keyword id="KW-1185">Reference proteome</keyword>
<dbReference type="EC" id="6.3.5.7" evidence="1"/>
<dbReference type="EMBL" id="CP001339">
    <property type="protein sequence ID" value="ACL71613.1"/>
    <property type="molecule type" value="Genomic_DNA"/>
</dbReference>
<dbReference type="RefSeq" id="WP_012637101.1">
    <property type="nucleotide sequence ID" value="NC_011901.1"/>
</dbReference>
<dbReference type="SMR" id="B8GL95"/>
<dbReference type="STRING" id="396588.Tgr7_0516"/>
<dbReference type="KEGG" id="tgr:Tgr7_0516"/>
<dbReference type="eggNOG" id="COG0154">
    <property type="taxonomic scope" value="Bacteria"/>
</dbReference>
<dbReference type="HOGENOM" id="CLU_009600_0_3_6"/>
<dbReference type="OrthoDB" id="9811471at2"/>
<dbReference type="Proteomes" id="UP000002383">
    <property type="component" value="Chromosome"/>
</dbReference>
<dbReference type="GO" id="GO:0030956">
    <property type="term" value="C:glutamyl-tRNA(Gln) amidotransferase complex"/>
    <property type="evidence" value="ECO:0007669"/>
    <property type="project" value="InterPro"/>
</dbReference>
<dbReference type="GO" id="GO:0005524">
    <property type="term" value="F:ATP binding"/>
    <property type="evidence" value="ECO:0007669"/>
    <property type="project" value="UniProtKB-KW"/>
</dbReference>
<dbReference type="GO" id="GO:0050567">
    <property type="term" value="F:glutaminyl-tRNA synthase (glutamine-hydrolyzing) activity"/>
    <property type="evidence" value="ECO:0007669"/>
    <property type="project" value="UniProtKB-UniRule"/>
</dbReference>
<dbReference type="GO" id="GO:0006412">
    <property type="term" value="P:translation"/>
    <property type="evidence" value="ECO:0007669"/>
    <property type="project" value="UniProtKB-UniRule"/>
</dbReference>
<dbReference type="Gene3D" id="3.90.1300.10">
    <property type="entry name" value="Amidase signature (AS) domain"/>
    <property type="match status" value="1"/>
</dbReference>
<dbReference type="HAMAP" id="MF_00120">
    <property type="entry name" value="GatA"/>
    <property type="match status" value="1"/>
</dbReference>
<dbReference type="InterPro" id="IPR000120">
    <property type="entry name" value="Amidase"/>
</dbReference>
<dbReference type="InterPro" id="IPR020556">
    <property type="entry name" value="Amidase_CS"/>
</dbReference>
<dbReference type="InterPro" id="IPR023631">
    <property type="entry name" value="Amidase_dom"/>
</dbReference>
<dbReference type="InterPro" id="IPR036928">
    <property type="entry name" value="AS_sf"/>
</dbReference>
<dbReference type="InterPro" id="IPR004412">
    <property type="entry name" value="GatA"/>
</dbReference>
<dbReference type="NCBIfam" id="TIGR00132">
    <property type="entry name" value="gatA"/>
    <property type="match status" value="1"/>
</dbReference>
<dbReference type="PANTHER" id="PTHR11895:SF151">
    <property type="entry name" value="GLUTAMYL-TRNA(GLN) AMIDOTRANSFERASE SUBUNIT A"/>
    <property type="match status" value="1"/>
</dbReference>
<dbReference type="PANTHER" id="PTHR11895">
    <property type="entry name" value="TRANSAMIDASE"/>
    <property type="match status" value="1"/>
</dbReference>
<dbReference type="Pfam" id="PF01425">
    <property type="entry name" value="Amidase"/>
    <property type="match status" value="1"/>
</dbReference>
<dbReference type="SUPFAM" id="SSF75304">
    <property type="entry name" value="Amidase signature (AS) enzymes"/>
    <property type="match status" value="1"/>
</dbReference>
<dbReference type="PROSITE" id="PS00571">
    <property type="entry name" value="AMIDASES"/>
    <property type="match status" value="1"/>
</dbReference>
<reference key="1">
    <citation type="journal article" date="2011" name="Stand. Genomic Sci.">
        <title>Complete genome sequence of 'Thioalkalivibrio sulfidophilus' HL-EbGr7.</title>
        <authorList>
            <person name="Muyzer G."/>
            <person name="Sorokin D.Y."/>
            <person name="Mavromatis K."/>
            <person name="Lapidus A."/>
            <person name="Clum A."/>
            <person name="Ivanova N."/>
            <person name="Pati A."/>
            <person name="d'Haeseleer P."/>
            <person name="Woyke T."/>
            <person name="Kyrpides N.C."/>
        </authorList>
    </citation>
    <scope>NUCLEOTIDE SEQUENCE [LARGE SCALE GENOMIC DNA]</scope>
    <source>
        <strain>HL-EbGR7</strain>
    </source>
</reference>
<comment type="function">
    <text evidence="1">Allows the formation of correctly charged Gln-tRNA(Gln) through the transamidation of misacylated Glu-tRNA(Gln) in organisms which lack glutaminyl-tRNA synthetase. The reaction takes place in the presence of glutamine and ATP through an activated gamma-phospho-Glu-tRNA(Gln).</text>
</comment>
<comment type="catalytic activity">
    <reaction evidence="1">
        <text>L-glutamyl-tRNA(Gln) + L-glutamine + ATP + H2O = L-glutaminyl-tRNA(Gln) + L-glutamate + ADP + phosphate + H(+)</text>
        <dbReference type="Rhea" id="RHEA:17521"/>
        <dbReference type="Rhea" id="RHEA-COMP:9681"/>
        <dbReference type="Rhea" id="RHEA-COMP:9684"/>
        <dbReference type="ChEBI" id="CHEBI:15377"/>
        <dbReference type="ChEBI" id="CHEBI:15378"/>
        <dbReference type="ChEBI" id="CHEBI:29985"/>
        <dbReference type="ChEBI" id="CHEBI:30616"/>
        <dbReference type="ChEBI" id="CHEBI:43474"/>
        <dbReference type="ChEBI" id="CHEBI:58359"/>
        <dbReference type="ChEBI" id="CHEBI:78520"/>
        <dbReference type="ChEBI" id="CHEBI:78521"/>
        <dbReference type="ChEBI" id="CHEBI:456216"/>
        <dbReference type="EC" id="6.3.5.7"/>
    </reaction>
</comment>
<comment type="subunit">
    <text evidence="1">Heterotrimer of A, B and C subunits.</text>
</comment>
<comment type="similarity">
    <text evidence="1">Belongs to the amidase family. GatA subfamily.</text>
</comment>
<proteinExistence type="inferred from homology"/>
<organism>
    <name type="scientific">Thioalkalivibrio sulfidiphilus (strain HL-EbGR7)</name>
    <dbReference type="NCBI Taxonomy" id="396588"/>
    <lineage>
        <taxon>Bacteria</taxon>
        <taxon>Pseudomonadati</taxon>
        <taxon>Pseudomonadota</taxon>
        <taxon>Gammaproteobacteria</taxon>
        <taxon>Chromatiales</taxon>
        <taxon>Ectothiorhodospiraceae</taxon>
        <taxon>Thioalkalivibrio</taxon>
    </lineage>
</organism>